<dbReference type="EMBL" id="Z72758">
    <property type="protein sequence ID" value="CAA96953.1"/>
    <property type="status" value="ALT_FRAME"/>
    <property type="molecule type" value="Genomic_DNA"/>
</dbReference>
<dbReference type="EMBL" id="BK006941">
    <property type="protein sequence ID" value="DAA07882.1"/>
    <property type="molecule type" value="Genomic_DNA"/>
</dbReference>
<dbReference type="PIR" id="S64258">
    <property type="entry name" value="S64258"/>
</dbReference>
<dbReference type="RefSeq" id="NP_011278.2">
    <property type="nucleotide sequence ID" value="NM_001181102.1"/>
</dbReference>
<dbReference type="SMR" id="P53070"/>
<dbReference type="BioGRID" id="33004">
    <property type="interactions" value="204"/>
</dbReference>
<dbReference type="DIP" id="DIP-4488N"/>
<dbReference type="FunCoup" id="P53070">
    <property type="interactions" value="907"/>
</dbReference>
<dbReference type="IntAct" id="P53070">
    <property type="interactions" value="3"/>
</dbReference>
<dbReference type="STRING" id="4932.YGL236C"/>
<dbReference type="iPTMnet" id="P53070"/>
<dbReference type="PaxDb" id="4932-YGL236C"/>
<dbReference type="PeptideAtlas" id="P53070"/>
<dbReference type="EnsemblFungi" id="YGL236C_mRNA">
    <property type="protein sequence ID" value="YGL236C"/>
    <property type="gene ID" value="YGL236C"/>
</dbReference>
<dbReference type="GeneID" id="852616"/>
<dbReference type="KEGG" id="sce:YGL236C"/>
<dbReference type="AGR" id="SGD:S000003205"/>
<dbReference type="SGD" id="S000003205">
    <property type="gene designation" value="MTO1"/>
</dbReference>
<dbReference type="VEuPathDB" id="FungiDB:YGL236C"/>
<dbReference type="eggNOG" id="KOG2311">
    <property type="taxonomic scope" value="Eukaryota"/>
</dbReference>
<dbReference type="GeneTree" id="ENSGT00390000011297"/>
<dbReference type="HOGENOM" id="CLU_007831_2_2_1"/>
<dbReference type="InParanoid" id="P53070"/>
<dbReference type="OMA" id="CNPAMGG"/>
<dbReference type="OrthoDB" id="3329at2759"/>
<dbReference type="BioCyc" id="MetaCyc:G3O-30709-MONOMER"/>
<dbReference type="BioCyc" id="YEAST:G3O-30709-MONOMER"/>
<dbReference type="BioGRID-ORCS" id="852616">
    <property type="hits" value="0 hits in 10 CRISPR screens"/>
</dbReference>
<dbReference type="PRO" id="PR:P53070"/>
<dbReference type="Proteomes" id="UP000002311">
    <property type="component" value="Chromosome VII"/>
</dbReference>
<dbReference type="RNAct" id="P53070">
    <property type="molecule type" value="protein"/>
</dbReference>
<dbReference type="GO" id="GO:0005739">
    <property type="term" value="C:mitochondrion"/>
    <property type="evidence" value="ECO:0000314"/>
    <property type="project" value="SGD"/>
</dbReference>
<dbReference type="GO" id="GO:0050660">
    <property type="term" value="F:flavin adenine dinucleotide binding"/>
    <property type="evidence" value="ECO:0000318"/>
    <property type="project" value="GO_Central"/>
</dbReference>
<dbReference type="GO" id="GO:0070899">
    <property type="term" value="P:mitochondrial tRNA wobble uridine modification"/>
    <property type="evidence" value="ECO:0000315"/>
    <property type="project" value="SGD"/>
</dbReference>
<dbReference type="GO" id="GO:0030488">
    <property type="term" value="P:tRNA methylation"/>
    <property type="evidence" value="ECO:0000318"/>
    <property type="project" value="GO_Central"/>
</dbReference>
<dbReference type="FunFam" id="3.50.50.60:FF:000145">
    <property type="entry name" value="tRNA uridine 5-carboxymethylaminomethyl modification enzyme"/>
    <property type="match status" value="1"/>
</dbReference>
<dbReference type="FunFam" id="1.10.150.570:FF:000001">
    <property type="entry name" value="tRNA uridine 5-carboxymethylaminomethyl modification enzyme MnmG"/>
    <property type="match status" value="1"/>
</dbReference>
<dbReference type="FunFam" id="3.50.50.60:FF:000002">
    <property type="entry name" value="tRNA uridine 5-carboxymethylaminomethyl modification enzyme MnmG"/>
    <property type="match status" value="1"/>
</dbReference>
<dbReference type="Gene3D" id="3.50.50.60">
    <property type="entry name" value="FAD/NAD(P)-binding domain"/>
    <property type="match status" value="2"/>
</dbReference>
<dbReference type="Gene3D" id="1.10.150.570">
    <property type="entry name" value="GidA associated domain, C-terminal subdomain"/>
    <property type="match status" value="1"/>
</dbReference>
<dbReference type="HAMAP" id="MF_00129">
    <property type="entry name" value="MnmG_GidA"/>
    <property type="match status" value="1"/>
</dbReference>
<dbReference type="InterPro" id="IPR036188">
    <property type="entry name" value="FAD/NAD-bd_sf"/>
</dbReference>
<dbReference type="InterPro" id="IPR049312">
    <property type="entry name" value="GIDA_C_N"/>
</dbReference>
<dbReference type="InterPro" id="IPR004416">
    <property type="entry name" value="MnmG"/>
</dbReference>
<dbReference type="InterPro" id="IPR002218">
    <property type="entry name" value="MnmG-rel"/>
</dbReference>
<dbReference type="InterPro" id="IPR020595">
    <property type="entry name" value="MnmG-rel_CS"/>
</dbReference>
<dbReference type="InterPro" id="IPR026904">
    <property type="entry name" value="MnmG_C"/>
</dbReference>
<dbReference type="InterPro" id="IPR047001">
    <property type="entry name" value="MnmG_C_subdom"/>
</dbReference>
<dbReference type="InterPro" id="IPR044920">
    <property type="entry name" value="MnmG_C_subdom_sf"/>
</dbReference>
<dbReference type="InterPro" id="IPR040131">
    <property type="entry name" value="MnmG_N"/>
</dbReference>
<dbReference type="NCBIfam" id="TIGR00136">
    <property type="entry name" value="mnmG_gidA"/>
    <property type="match status" value="1"/>
</dbReference>
<dbReference type="PANTHER" id="PTHR11806">
    <property type="entry name" value="GLUCOSE INHIBITED DIVISION PROTEIN A"/>
    <property type="match status" value="1"/>
</dbReference>
<dbReference type="PANTHER" id="PTHR11806:SF0">
    <property type="entry name" value="PROTEIN MTO1 HOMOLOG, MITOCHONDRIAL"/>
    <property type="match status" value="1"/>
</dbReference>
<dbReference type="Pfam" id="PF01134">
    <property type="entry name" value="GIDA"/>
    <property type="match status" value="1"/>
</dbReference>
<dbReference type="Pfam" id="PF21680">
    <property type="entry name" value="GIDA_C_1st"/>
    <property type="match status" value="1"/>
</dbReference>
<dbReference type="Pfam" id="PF13932">
    <property type="entry name" value="SAM_GIDA_C"/>
    <property type="match status" value="1"/>
</dbReference>
<dbReference type="SMART" id="SM01228">
    <property type="entry name" value="GIDA_assoc_3"/>
    <property type="match status" value="1"/>
</dbReference>
<dbReference type="SUPFAM" id="SSF51905">
    <property type="entry name" value="FAD/NAD(P)-binding domain"/>
    <property type="match status" value="1"/>
</dbReference>
<dbReference type="PROSITE" id="PS01280">
    <property type="entry name" value="GIDA_1"/>
    <property type="match status" value="1"/>
</dbReference>
<dbReference type="PROSITE" id="PS01281">
    <property type="entry name" value="GIDA_2"/>
    <property type="match status" value="1"/>
</dbReference>
<proteinExistence type="evidence at protein level"/>
<gene>
    <name type="primary">MTO1</name>
    <name type="synonym">IPS1</name>
    <name type="ordered locus">YGL236C</name>
</gene>
<reference key="1">
    <citation type="journal article" date="1997" name="Nature">
        <title>The nucleotide sequence of Saccharomyces cerevisiae chromosome VII.</title>
        <authorList>
            <person name="Tettelin H."/>
            <person name="Agostoni-Carbone M.L."/>
            <person name="Albermann K."/>
            <person name="Albers M."/>
            <person name="Arroyo J."/>
            <person name="Backes U."/>
            <person name="Barreiros T."/>
            <person name="Bertani I."/>
            <person name="Bjourson A.J."/>
            <person name="Brueckner M."/>
            <person name="Bruschi C.V."/>
            <person name="Carignani G."/>
            <person name="Castagnoli L."/>
            <person name="Cerdan E."/>
            <person name="Clemente M.L."/>
            <person name="Coblenz A."/>
            <person name="Coglievina M."/>
            <person name="Coissac E."/>
            <person name="Defoor E."/>
            <person name="Del Bino S."/>
            <person name="Delius H."/>
            <person name="Delneri D."/>
            <person name="de Wergifosse P."/>
            <person name="Dujon B."/>
            <person name="Durand P."/>
            <person name="Entian K.-D."/>
            <person name="Eraso P."/>
            <person name="Escribano V."/>
            <person name="Fabiani L."/>
            <person name="Fartmann B."/>
            <person name="Feroli F."/>
            <person name="Feuermann M."/>
            <person name="Frontali L."/>
            <person name="Garcia-Gonzalez M."/>
            <person name="Garcia-Saez M.I."/>
            <person name="Goffeau A."/>
            <person name="Guerreiro P."/>
            <person name="Hani J."/>
            <person name="Hansen M."/>
            <person name="Hebling U."/>
            <person name="Hernandez K."/>
            <person name="Heumann K."/>
            <person name="Hilger F."/>
            <person name="Hofmann B."/>
            <person name="Indge K.J."/>
            <person name="James C.M."/>
            <person name="Klima R."/>
            <person name="Koetter P."/>
            <person name="Kramer B."/>
            <person name="Kramer W."/>
            <person name="Lauquin G."/>
            <person name="Leuther H."/>
            <person name="Louis E.J."/>
            <person name="Maillier E."/>
            <person name="Marconi A."/>
            <person name="Martegani E."/>
            <person name="Mazon M.J."/>
            <person name="Mazzoni C."/>
            <person name="McReynolds A.D.K."/>
            <person name="Melchioretto P."/>
            <person name="Mewes H.-W."/>
            <person name="Minenkova O."/>
            <person name="Mueller-Auer S."/>
            <person name="Nawrocki A."/>
            <person name="Netter P."/>
            <person name="Neu R."/>
            <person name="Nombela C."/>
            <person name="Oliver S.G."/>
            <person name="Panzeri L."/>
            <person name="Paoluzi S."/>
            <person name="Plevani P."/>
            <person name="Portetelle D."/>
            <person name="Portillo F."/>
            <person name="Potier S."/>
            <person name="Purnelle B."/>
            <person name="Rieger M."/>
            <person name="Riles L."/>
            <person name="Rinaldi T."/>
            <person name="Robben J."/>
            <person name="Rodrigues-Pousada C."/>
            <person name="Rodriguez-Belmonte E."/>
            <person name="Rodriguez-Torres A.M."/>
            <person name="Rose M."/>
            <person name="Ruzzi M."/>
            <person name="Saliola M."/>
            <person name="Sanchez-Perez M."/>
            <person name="Schaefer B."/>
            <person name="Schaefer M."/>
            <person name="Scharfe M."/>
            <person name="Schmidheini T."/>
            <person name="Schreer A."/>
            <person name="Skala J."/>
            <person name="Souciet J.-L."/>
            <person name="Steensma H.Y."/>
            <person name="Talla E."/>
            <person name="Thierry A."/>
            <person name="Vandenbol M."/>
            <person name="van der Aart Q.J.M."/>
            <person name="Van Dyck L."/>
            <person name="Vanoni M."/>
            <person name="Verhasselt P."/>
            <person name="Voet M."/>
            <person name="Volckaert G."/>
            <person name="Wambutt R."/>
            <person name="Watson M.D."/>
            <person name="Weber N."/>
            <person name="Wedler E."/>
            <person name="Wedler H."/>
            <person name="Wipfli P."/>
            <person name="Wolf K."/>
            <person name="Wright L.F."/>
            <person name="Zaccaria P."/>
            <person name="Zimmermann M."/>
            <person name="Zollner A."/>
            <person name="Kleine K."/>
        </authorList>
    </citation>
    <scope>NUCLEOTIDE SEQUENCE [LARGE SCALE GENOMIC DNA]</scope>
    <source>
        <strain>ATCC 204508 / S288c</strain>
    </source>
</reference>
<reference key="2">
    <citation type="journal article" date="2014" name="G3 (Bethesda)">
        <title>The reference genome sequence of Saccharomyces cerevisiae: Then and now.</title>
        <authorList>
            <person name="Engel S.R."/>
            <person name="Dietrich F.S."/>
            <person name="Fisk D.G."/>
            <person name="Binkley G."/>
            <person name="Balakrishnan R."/>
            <person name="Costanzo M.C."/>
            <person name="Dwight S.S."/>
            <person name="Hitz B.C."/>
            <person name="Karra K."/>
            <person name="Nash R.S."/>
            <person name="Weng S."/>
            <person name="Wong E.D."/>
            <person name="Lloyd P."/>
            <person name="Skrzypek M.S."/>
            <person name="Miyasato S.R."/>
            <person name="Simison M."/>
            <person name="Cherry J.M."/>
        </authorList>
    </citation>
    <scope>GENOME REANNOTATION</scope>
    <source>
        <strain>ATCC 204508 / S288c</strain>
    </source>
</reference>
<reference key="3">
    <citation type="journal article" date="1998" name="J. Biol. Chem.">
        <title>MTO1 codes for a mitochondrial protein required for respiration in paromomycin-resistant mutants of Saccharomyces cerevisiae.</title>
        <authorList>
            <person name="Colby G."/>
            <person name="Wu M."/>
            <person name="Tzagoloff A."/>
        </authorList>
    </citation>
    <scope>FUNCTION</scope>
    <scope>SUBCELLULAR LOCATION</scope>
    <scope>INTERACTION WITH MSS1</scope>
</reference>
<reference key="4">
    <citation type="journal article" date="2003" name="Nature">
        <title>Sequencing and comparison of yeast species to identify genes and regulatory elements.</title>
        <authorList>
            <person name="Kellis M."/>
            <person name="Patterson N."/>
            <person name="Endrizzi M."/>
            <person name="Birren B.W."/>
            <person name="Lander E.S."/>
        </authorList>
    </citation>
    <scope>IDENTIFICATION OF FRAMESHIFT</scope>
</reference>
<reference key="5">
    <citation type="journal article" date="2012" name="Am. J. Hum. Genet.">
        <title>Mutations of the mitochondrial-tRNA modifier MTO1 cause hypertrophic cardiomyopathy and lactic acidosis.</title>
        <authorList>
            <person name="Ghezzi D."/>
            <person name="Baruffini E."/>
            <person name="Haack T.B."/>
            <person name="Invernizzi F."/>
            <person name="Melchionda L."/>
            <person name="Dallabona C."/>
            <person name="Strom T.M."/>
            <person name="Parini R."/>
            <person name="Burlina A.B."/>
            <person name="Meitinger T."/>
            <person name="Prokisch H."/>
            <person name="Ferrero I."/>
            <person name="Zeviani M."/>
        </authorList>
    </citation>
    <scope>MUTAGENESIS OF ALA-431</scope>
</reference>
<comment type="function">
    <text evidence="4">Component of the MSS1-MTO1 complex that catalyzes the 5-carboxymethylaminomethyluridine (cmnm(5)U) modification at the 34th wobble position (U34) of mitochondrial tRNAs.</text>
</comment>
<comment type="cofactor">
    <cofactor evidence="1">
        <name>FAD</name>
        <dbReference type="ChEBI" id="CHEBI:57692"/>
    </cofactor>
</comment>
<comment type="subunit">
    <text evidence="4">Interacts with MSS1; forms the heterodimer MSS1-MTO1 complex.</text>
</comment>
<comment type="subcellular location">
    <subcellularLocation>
        <location evidence="4">Mitochondrion</location>
    </subcellularLocation>
</comment>
<comment type="similarity">
    <text evidence="5">Belongs to the MnmG family.</text>
</comment>
<comment type="sequence caution" evidence="5">
    <conflict type="frameshift">
        <sequence resource="EMBL-CDS" id="CAA96953"/>
    </conflict>
</comment>
<feature type="transit peptide" description="Mitochondrion" evidence="2">
    <location>
        <begin position="1"/>
        <end position="59"/>
    </location>
</feature>
<feature type="chain" id="PRO_0000042687" description="Mitochondrial translation optimization protein 1">
    <location>
        <begin position="60"/>
        <end position="669"/>
    </location>
</feature>
<feature type="mutagenesis site" description="Does not completely restore mitochondrial DNA-dependent respiratory chain activities in respiration-defective mutant cells." evidence="3">
    <original>A</original>
    <variation>T</variation>
    <location>
        <position position="431"/>
    </location>
</feature>
<evidence type="ECO:0000250" key="1">
    <source>
        <dbReference type="UniProtKB" id="O66962"/>
    </source>
</evidence>
<evidence type="ECO:0000255" key="2"/>
<evidence type="ECO:0000269" key="3">
    <source>
    </source>
</evidence>
<evidence type="ECO:0000269" key="4">
    <source>
    </source>
</evidence>
<evidence type="ECO:0000305" key="5"/>
<accession>P53070</accession>
<accession>D6VV98</accession>
<organism>
    <name type="scientific">Saccharomyces cerevisiae (strain ATCC 204508 / S288c)</name>
    <name type="common">Baker's yeast</name>
    <dbReference type="NCBI Taxonomy" id="559292"/>
    <lineage>
        <taxon>Eukaryota</taxon>
        <taxon>Fungi</taxon>
        <taxon>Dikarya</taxon>
        <taxon>Ascomycota</taxon>
        <taxon>Saccharomycotina</taxon>
        <taxon>Saccharomycetes</taxon>
        <taxon>Saccharomycetales</taxon>
        <taxon>Saccharomycetaceae</taxon>
        <taxon>Saccharomyces</taxon>
    </lineage>
</organism>
<keyword id="KW-0274">FAD</keyword>
<keyword id="KW-0285">Flavoprotein</keyword>
<keyword id="KW-0496">Mitochondrion</keyword>
<keyword id="KW-1185">Reference proteome</keyword>
<keyword id="KW-0809">Transit peptide</keyword>
<keyword id="KW-0819">tRNA processing</keyword>
<name>MTO1_YEAST</name>
<sequence>MLRVTTLASSCTSFPLQVLRRRLTISSLTSFQPTTKTQVVVIGAGHAGCEAAAASSRTGAHTTLITPSLTDIGKCSCNPSIGGVGKGILVKEIDALDGLMGKVTDLAGVQFKMLNRSKGPAVWGPRAQIDRELYKKYMQRELSDKKAHPNLSLLQNKVADLILYDPGCGHKVIKGVVLDDGTQVGADQVIITTGTFLSAEIHIGDKRIAAGRIGEQPTYGISNTLQNEVGFQLGRLKTGTPARLAKESIDFSALEVQKGDALPVPMSFLNETVSVEPTKQLDCFGTHTTPQMHDFLRNNLHQSIHIQDTTIKGPRYCPSIEAKILRFPDRSSHKIWLEPEGFNSDVIYPNGISNSMPEDVQLQMMRLIPGMANVEILQPAYGVEYDYVDPRQLKPSLETKLVDGLFLAGQINGTTGYEEAAAQGIIAGINAGLLSRQEREQLVLKRSEAYIGVLIDDLINNGVIEPYRMFTSRSEFRISVRADNADFRLTPIGAQLGIISPVRLSQYSRDKHLYDETIRALQNFKLSSQKWSSLLQANIAPQAENRSAWEIFRFKDMDLHKLYECIPDLPINLLDIPMHVVTKINIQGKYEPYIVKQNQFVKAFQADENMLLPQDYDYRQLPTLSTECKLLLNRVQPLTIGQARRIQGITAAALFELYRVARKPSQPVM</sequence>
<protein>
    <recommendedName>
        <fullName>Mitochondrial translation optimization protein 1</fullName>
    </recommendedName>
</protein>